<reference key="1">
    <citation type="journal article" date="1999" name="Gene">
        <title>Structure and expression of three src2 homologues and a novel subfamily of flavoprotein monooxygenase genes revealed by the analysis of a 25kb fragment from Arabidopsis thaliana chromosome IV.</title>
        <authorList>
            <person name="Aubourg S."/>
            <person name="Picaud A."/>
            <person name="Kreis M."/>
            <person name="Lecharny A."/>
        </authorList>
    </citation>
    <scope>NUCLEOTIDE SEQUENCE [MRNA]</scope>
    <scope>TISSUE SPECIFICITY</scope>
    <scope>GENE FAMILY</scope>
    <scope>NOMENCLATURE</scope>
    <source>
        <strain>cv. Columbia</strain>
    </source>
</reference>
<reference key="2">
    <citation type="journal article" date="1998" name="Nature">
        <title>Analysis of 1.9 Mb of contiguous sequence from chromosome 4 of Arabidopsis thaliana.</title>
        <authorList>
            <person name="Bevan M."/>
            <person name="Bancroft I."/>
            <person name="Bent E."/>
            <person name="Love K."/>
            <person name="Goodman H.M."/>
            <person name="Dean C."/>
            <person name="Bergkamp R."/>
            <person name="Dirkse W."/>
            <person name="van Staveren M."/>
            <person name="Stiekema W."/>
            <person name="Drost L."/>
            <person name="Ridley P."/>
            <person name="Hudson S.-A."/>
            <person name="Patel K."/>
            <person name="Murphy G."/>
            <person name="Piffanelli P."/>
            <person name="Wedler H."/>
            <person name="Wedler E."/>
            <person name="Wambutt R."/>
            <person name="Weitzenegger T."/>
            <person name="Pohl T."/>
            <person name="Terryn N."/>
            <person name="Gielen J."/>
            <person name="Villarroel R."/>
            <person name="De Clercq R."/>
            <person name="van Montagu M."/>
            <person name="Lecharny A."/>
            <person name="Aubourg S."/>
            <person name="Gy I."/>
            <person name="Kreis M."/>
            <person name="Lao N."/>
            <person name="Kavanagh T."/>
            <person name="Hempel S."/>
            <person name="Kotter P."/>
            <person name="Entian K.-D."/>
            <person name="Rieger M."/>
            <person name="Schaefer M."/>
            <person name="Funk B."/>
            <person name="Mueller-Auer S."/>
            <person name="Silvey M."/>
            <person name="James R."/>
            <person name="Monfort A."/>
            <person name="Pons A."/>
            <person name="Puigdomenech P."/>
            <person name="Douka A."/>
            <person name="Voukelatou E."/>
            <person name="Milioni D."/>
            <person name="Hatzopoulos P."/>
            <person name="Piravandi E."/>
            <person name="Obermaier B."/>
            <person name="Hilbert H."/>
            <person name="Duesterhoeft A."/>
            <person name="Moores T."/>
            <person name="Jones J.D.G."/>
            <person name="Eneva T."/>
            <person name="Palme K."/>
            <person name="Benes V."/>
            <person name="Rechmann S."/>
            <person name="Ansorge W."/>
            <person name="Cooke R."/>
            <person name="Berger C."/>
            <person name="Delseny M."/>
            <person name="Voet M."/>
            <person name="Volckaert G."/>
            <person name="Mewes H.-W."/>
            <person name="Klosterman S."/>
            <person name="Schueller C."/>
            <person name="Chalwatzis N."/>
        </authorList>
    </citation>
    <scope>NUCLEOTIDE SEQUENCE [LARGE SCALE GENOMIC DNA]</scope>
    <source>
        <strain>cv. Columbia</strain>
    </source>
</reference>
<reference key="3">
    <citation type="journal article" date="1999" name="Nature">
        <title>Sequence and analysis of chromosome 4 of the plant Arabidopsis thaliana.</title>
        <authorList>
            <person name="Mayer K.F.X."/>
            <person name="Schueller C."/>
            <person name="Wambutt R."/>
            <person name="Murphy G."/>
            <person name="Volckaert G."/>
            <person name="Pohl T."/>
            <person name="Duesterhoeft A."/>
            <person name="Stiekema W."/>
            <person name="Entian K.-D."/>
            <person name="Terryn N."/>
            <person name="Harris B."/>
            <person name="Ansorge W."/>
            <person name="Brandt P."/>
            <person name="Grivell L.A."/>
            <person name="Rieger M."/>
            <person name="Weichselgartner M."/>
            <person name="de Simone V."/>
            <person name="Obermaier B."/>
            <person name="Mache R."/>
            <person name="Mueller M."/>
            <person name="Kreis M."/>
            <person name="Delseny M."/>
            <person name="Puigdomenech P."/>
            <person name="Watson M."/>
            <person name="Schmidtheini T."/>
            <person name="Reichert B."/>
            <person name="Portetelle D."/>
            <person name="Perez-Alonso M."/>
            <person name="Boutry M."/>
            <person name="Bancroft I."/>
            <person name="Vos P."/>
            <person name="Hoheisel J."/>
            <person name="Zimmermann W."/>
            <person name="Wedler H."/>
            <person name="Ridley P."/>
            <person name="Langham S.-A."/>
            <person name="McCullagh B."/>
            <person name="Bilham L."/>
            <person name="Robben J."/>
            <person name="van der Schueren J."/>
            <person name="Grymonprez B."/>
            <person name="Chuang Y.-J."/>
            <person name="Vandenbussche F."/>
            <person name="Braeken M."/>
            <person name="Weltjens I."/>
            <person name="Voet M."/>
            <person name="Bastiaens I."/>
            <person name="Aert R."/>
            <person name="Defoor E."/>
            <person name="Weitzenegger T."/>
            <person name="Bothe G."/>
            <person name="Ramsperger U."/>
            <person name="Hilbert H."/>
            <person name="Braun M."/>
            <person name="Holzer E."/>
            <person name="Brandt A."/>
            <person name="Peters S."/>
            <person name="van Staveren M."/>
            <person name="Dirkse W."/>
            <person name="Mooijman P."/>
            <person name="Klein Lankhorst R."/>
            <person name="Rose M."/>
            <person name="Hauf J."/>
            <person name="Koetter P."/>
            <person name="Berneiser S."/>
            <person name="Hempel S."/>
            <person name="Feldpausch M."/>
            <person name="Lamberth S."/>
            <person name="Van den Daele H."/>
            <person name="De Keyser A."/>
            <person name="Buysshaert C."/>
            <person name="Gielen J."/>
            <person name="Villarroel R."/>
            <person name="De Clercq R."/>
            <person name="van Montagu M."/>
            <person name="Rogers J."/>
            <person name="Cronin A."/>
            <person name="Quail M.A."/>
            <person name="Bray-Allen S."/>
            <person name="Clark L."/>
            <person name="Doggett J."/>
            <person name="Hall S."/>
            <person name="Kay M."/>
            <person name="Lennard N."/>
            <person name="McLay K."/>
            <person name="Mayes R."/>
            <person name="Pettett A."/>
            <person name="Rajandream M.A."/>
            <person name="Lyne M."/>
            <person name="Benes V."/>
            <person name="Rechmann S."/>
            <person name="Borkova D."/>
            <person name="Bloecker H."/>
            <person name="Scharfe M."/>
            <person name="Grimm M."/>
            <person name="Loehnert T.-H."/>
            <person name="Dose S."/>
            <person name="de Haan M."/>
            <person name="Maarse A.C."/>
            <person name="Schaefer M."/>
            <person name="Mueller-Auer S."/>
            <person name="Gabel C."/>
            <person name="Fuchs M."/>
            <person name="Fartmann B."/>
            <person name="Granderath K."/>
            <person name="Dauner D."/>
            <person name="Herzl A."/>
            <person name="Neumann S."/>
            <person name="Argiriou A."/>
            <person name="Vitale D."/>
            <person name="Liguori R."/>
            <person name="Piravandi E."/>
            <person name="Massenet O."/>
            <person name="Quigley F."/>
            <person name="Clabauld G."/>
            <person name="Muendlein A."/>
            <person name="Felber R."/>
            <person name="Schnabl S."/>
            <person name="Hiller R."/>
            <person name="Schmidt W."/>
            <person name="Lecharny A."/>
            <person name="Aubourg S."/>
            <person name="Chefdor F."/>
            <person name="Cooke R."/>
            <person name="Berger C."/>
            <person name="Monfort A."/>
            <person name="Casacuberta E."/>
            <person name="Gibbons T."/>
            <person name="Weber N."/>
            <person name="Vandenbol M."/>
            <person name="Bargues M."/>
            <person name="Terol J."/>
            <person name="Torres A."/>
            <person name="Perez-Perez A."/>
            <person name="Purnelle B."/>
            <person name="Bent E."/>
            <person name="Johnson S."/>
            <person name="Tacon D."/>
            <person name="Jesse T."/>
            <person name="Heijnen L."/>
            <person name="Schwarz S."/>
            <person name="Scholler P."/>
            <person name="Heber S."/>
            <person name="Francs P."/>
            <person name="Bielke C."/>
            <person name="Frishman D."/>
            <person name="Haase D."/>
            <person name="Lemcke K."/>
            <person name="Mewes H.-W."/>
            <person name="Stocker S."/>
            <person name="Zaccaria P."/>
            <person name="Bevan M."/>
            <person name="Wilson R.K."/>
            <person name="de la Bastide M."/>
            <person name="Habermann K."/>
            <person name="Parnell L."/>
            <person name="Dedhia N."/>
            <person name="Gnoj L."/>
            <person name="Schutz K."/>
            <person name="Huang E."/>
            <person name="Spiegel L."/>
            <person name="Sekhon M."/>
            <person name="Murray J."/>
            <person name="Sheet P."/>
            <person name="Cordes M."/>
            <person name="Abu-Threideh J."/>
            <person name="Stoneking T."/>
            <person name="Kalicki J."/>
            <person name="Graves T."/>
            <person name="Harmon G."/>
            <person name="Edwards J."/>
            <person name="Latreille P."/>
            <person name="Courtney L."/>
            <person name="Cloud J."/>
            <person name="Abbott A."/>
            <person name="Scott K."/>
            <person name="Johnson D."/>
            <person name="Minx P."/>
            <person name="Bentley D."/>
            <person name="Fulton B."/>
            <person name="Miller N."/>
            <person name="Greco T."/>
            <person name="Kemp K."/>
            <person name="Kramer J."/>
            <person name="Fulton L."/>
            <person name="Mardis E."/>
            <person name="Dante M."/>
            <person name="Pepin K."/>
            <person name="Hillier L.W."/>
            <person name="Nelson J."/>
            <person name="Spieth J."/>
            <person name="Ryan E."/>
            <person name="Andrews S."/>
            <person name="Geisel C."/>
            <person name="Layman D."/>
            <person name="Du H."/>
            <person name="Ali J."/>
            <person name="Berghoff A."/>
            <person name="Jones K."/>
            <person name="Drone K."/>
            <person name="Cotton M."/>
            <person name="Joshu C."/>
            <person name="Antonoiu B."/>
            <person name="Zidanic M."/>
            <person name="Strong C."/>
            <person name="Sun H."/>
            <person name="Lamar B."/>
            <person name="Yordan C."/>
            <person name="Ma P."/>
            <person name="Zhong J."/>
            <person name="Preston R."/>
            <person name="Vil D."/>
            <person name="Shekher M."/>
            <person name="Matero A."/>
            <person name="Shah R."/>
            <person name="Swaby I.K."/>
            <person name="O'Shaughnessy A."/>
            <person name="Rodriguez M."/>
            <person name="Hoffman J."/>
            <person name="Till S."/>
            <person name="Granat S."/>
            <person name="Shohdy N."/>
            <person name="Hasegawa A."/>
            <person name="Hameed A."/>
            <person name="Lodhi M."/>
            <person name="Johnson A."/>
            <person name="Chen E."/>
            <person name="Marra M.A."/>
            <person name="Martienssen R."/>
            <person name="McCombie W.R."/>
        </authorList>
    </citation>
    <scope>NUCLEOTIDE SEQUENCE [LARGE SCALE GENOMIC DNA]</scope>
    <source>
        <strain>cv. Columbia</strain>
    </source>
</reference>
<reference key="4">
    <citation type="journal article" date="2017" name="Plant J.">
        <title>Araport11: a complete reannotation of the Arabidopsis thaliana reference genome.</title>
        <authorList>
            <person name="Cheng C.Y."/>
            <person name="Krishnakumar V."/>
            <person name="Chan A.P."/>
            <person name="Thibaud-Nissen F."/>
            <person name="Schobel S."/>
            <person name="Town C.D."/>
        </authorList>
    </citation>
    <scope>GENOME REANNOTATION</scope>
    <source>
        <strain>cv. Columbia</strain>
    </source>
</reference>
<reference key="5">
    <citation type="submission" date="2004-09" db="EMBL/GenBank/DDBJ databases">
        <title>Large-scale analysis of RIKEN Arabidopsis full-length (RAFL) cDNAs.</title>
        <authorList>
            <person name="Totoki Y."/>
            <person name="Seki M."/>
            <person name="Ishida J."/>
            <person name="Nakajima M."/>
            <person name="Enju A."/>
            <person name="Kamiya A."/>
            <person name="Narusaka M."/>
            <person name="Shin-i T."/>
            <person name="Nakagawa M."/>
            <person name="Sakamoto N."/>
            <person name="Oishi K."/>
            <person name="Kohara Y."/>
            <person name="Kobayashi M."/>
            <person name="Toyoda A."/>
            <person name="Sakaki Y."/>
            <person name="Sakurai T."/>
            <person name="Iida K."/>
            <person name="Akiyama K."/>
            <person name="Satou M."/>
            <person name="Toyoda T."/>
            <person name="Konagaya A."/>
            <person name="Carninci P."/>
            <person name="Kawai J."/>
            <person name="Hayashizaki Y."/>
            <person name="Shinozaki K."/>
        </authorList>
    </citation>
    <scope>NUCLEOTIDE SEQUENCE [LARGE SCALE MRNA]</scope>
    <source>
        <strain>cv. Columbia</strain>
    </source>
</reference>
<reference key="6">
    <citation type="journal article" date="2009" name="BMC Plant Biol.">
        <title>A compatible interaction of Alternaria brassicicola with Arabidopsis thaliana ecotype DiG: evidence for a specific transcriptional signature.</title>
        <authorList>
            <person name="Mukherjee A.K."/>
            <person name="Lev S."/>
            <person name="Gepstein S."/>
            <person name="Horwitz B.A."/>
        </authorList>
    </citation>
    <scope>INDUCTION BY A.BRASSICICOLA</scope>
    <source>
        <strain>cv. Columbia</strain>
        <strain>cv. Di-G</strain>
    </source>
</reference>
<sequence>MEEIGIVIVGGGIAGLATSIALHRKGIKSVVLERAEKVRSEGAGIGTLSNGWRALDQLGVGDRLRLNSSLIHKARTMLIENGKKREFVSNIVDEARCIKRNDLVEALSDALPKGTIRFGSHIVSIEQDKTTLFPVVHLANGNSIKAKVLIGCDGANSIVSDYLQLNPKKAFACRAVRGFTKYPNGHGFPQEVLRIKQGNVLIGRLPLTDNQVFWFLVHMQDNNHNGKDQESIANLCRKWADDLSEDWKEMVKICNVESLTLTHLRYRAPSEIMLGKFRRGTVTVAGDAMHVMGPFLAQGGSAALEDAVVLARCLARKVGPDHGDLLKDCSMKNIEEAIDEYVDERRMRLLGLSVQTYLTGRSLQTSSKVLRLMFIALLLLLFGRDQIRHTRYDCGRL</sequence>
<name>MO1_ARATH</name>
<protein>
    <recommendedName>
        <fullName evidence="4">Monooxygenase 1</fullName>
        <shortName evidence="4">AtMO1</shortName>
        <ecNumber>1.14.13.-</ecNumber>
    </recommendedName>
</protein>
<feature type="chain" id="PRO_0000441114" description="Monooxygenase 1">
    <location>
        <begin position="1"/>
        <end position="397"/>
    </location>
</feature>
<proteinExistence type="evidence at transcript level"/>
<accession>O81815</accession>
<accession>F4JK84</accession>
<accession>O23427</accession>
<organism>
    <name type="scientific">Arabidopsis thaliana</name>
    <name type="common">Mouse-ear cress</name>
    <dbReference type="NCBI Taxonomy" id="3702"/>
    <lineage>
        <taxon>Eukaryota</taxon>
        <taxon>Viridiplantae</taxon>
        <taxon>Streptophyta</taxon>
        <taxon>Embryophyta</taxon>
        <taxon>Tracheophyta</taxon>
        <taxon>Spermatophyta</taxon>
        <taxon>Magnoliopsida</taxon>
        <taxon>eudicotyledons</taxon>
        <taxon>Gunneridae</taxon>
        <taxon>Pentapetalae</taxon>
        <taxon>rosids</taxon>
        <taxon>malvids</taxon>
        <taxon>Brassicales</taxon>
        <taxon>Brassicaceae</taxon>
        <taxon>Camelineae</taxon>
        <taxon>Arabidopsis</taxon>
    </lineage>
</organism>
<keyword id="KW-0274">FAD</keyword>
<keyword id="KW-0285">Flavoprotein</keyword>
<keyword id="KW-0503">Monooxygenase</keyword>
<keyword id="KW-0560">Oxidoreductase</keyword>
<keyword id="KW-1185">Reference proteome</keyword>
<dbReference type="EC" id="1.14.13.-"/>
<dbReference type="EMBL" id="AJ007587">
    <property type="protein sequence ID" value="CAA07574.1"/>
    <property type="molecule type" value="mRNA"/>
</dbReference>
<dbReference type="EMBL" id="Z97339">
    <property type="protein sequence ID" value="CAB10354.1"/>
    <property type="status" value="ALT_SEQ"/>
    <property type="molecule type" value="Genomic_DNA"/>
</dbReference>
<dbReference type="EMBL" id="AL161542">
    <property type="protein sequence ID" value="CAB78618.1"/>
    <property type="status" value="ALT_SEQ"/>
    <property type="molecule type" value="Genomic_DNA"/>
</dbReference>
<dbReference type="EMBL" id="CP002687">
    <property type="protein sequence ID" value="AEE83647.1"/>
    <property type="status" value="ALT_INIT"/>
    <property type="molecule type" value="Genomic_DNA"/>
</dbReference>
<dbReference type="EMBL" id="AK175153">
    <property type="protein sequence ID" value="BAD42916.1"/>
    <property type="molecule type" value="mRNA"/>
</dbReference>
<dbReference type="EMBL" id="AK175199">
    <property type="protein sequence ID" value="BAD42962.1"/>
    <property type="molecule type" value="mRNA"/>
</dbReference>
<dbReference type="EMBL" id="AK175294">
    <property type="protein sequence ID" value="BAD43057.1"/>
    <property type="molecule type" value="mRNA"/>
</dbReference>
<dbReference type="EMBL" id="AK175336">
    <property type="protein sequence ID" value="BAD43099.1"/>
    <property type="molecule type" value="mRNA"/>
</dbReference>
<dbReference type="EMBL" id="AK175354">
    <property type="protein sequence ID" value="BAD43117.1"/>
    <property type="molecule type" value="mRNA"/>
</dbReference>
<dbReference type="EMBL" id="AK175412">
    <property type="protein sequence ID" value="BAD43175.1"/>
    <property type="molecule type" value="mRNA"/>
</dbReference>
<dbReference type="EMBL" id="AK175466">
    <property type="protein sequence ID" value="BAD43229.1"/>
    <property type="molecule type" value="mRNA"/>
</dbReference>
<dbReference type="EMBL" id="AK175487">
    <property type="protein sequence ID" value="BAD43250.1"/>
    <property type="molecule type" value="mRNA"/>
</dbReference>
<dbReference type="EMBL" id="AK176335">
    <property type="protein sequence ID" value="BAD44098.1"/>
    <property type="molecule type" value="mRNA"/>
</dbReference>
<dbReference type="EMBL" id="AK176434">
    <property type="protein sequence ID" value="BAD44197.1"/>
    <property type="molecule type" value="mRNA"/>
</dbReference>
<dbReference type="EMBL" id="AK176523">
    <property type="protein sequence ID" value="BAD44286.1"/>
    <property type="molecule type" value="mRNA"/>
</dbReference>
<dbReference type="EMBL" id="AK176601">
    <property type="protein sequence ID" value="BAD44364.1"/>
    <property type="molecule type" value="mRNA"/>
</dbReference>
<dbReference type="EMBL" id="AK176701">
    <property type="protein sequence ID" value="BAD44464.1"/>
    <property type="molecule type" value="mRNA"/>
</dbReference>
<dbReference type="EMBL" id="AK176715">
    <property type="protein sequence ID" value="BAD44478.1"/>
    <property type="molecule type" value="mRNA"/>
</dbReference>
<dbReference type="EMBL" id="AK176742">
    <property type="protein sequence ID" value="BAD44505.1"/>
    <property type="molecule type" value="mRNA"/>
</dbReference>
<dbReference type="EMBL" id="AK176746">
    <property type="protein sequence ID" value="BAD44509.1"/>
    <property type="molecule type" value="mRNA"/>
</dbReference>
<dbReference type="PIR" id="H71422">
    <property type="entry name" value="H71422"/>
</dbReference>
<dbReference type="PIR" id="T51603">
    <property type="entry name" value="T51603"/>
</dbReference>
<dbReference type="RefSeq" id="NP_193311.6">
    <property type="nucleotide sequence ID" value="NM_117667.9"/>
</dbReference>
<dbReference type="SMR" id="O81815"/>
<dbReference type="FunCoup" id="O81815">
    <property type="interactions" value="94"/>
</dbReference>
<dbReference type="STRING" id="3702.O81815"/>
<dbReference type="SwissPalm" id="O81815"/>
<dbReference type="PaxDb" id="3702-AT4G15760.1"/>
<dbReference type="ProteomicsDB" id="238344"/>
<dbReference type="GeneID" id="827255"/>
<dbReference type="KEGG" id="ath:AT4G15760"/>
<dbReference type="Araport" id="AT4G15760"/>
<dbReference type="TAIR" id="AT4G15760">
    <property type="gene designation" value="MO1"/>
</dbReference>
<dbReference type="eggNOG" id="KOG2614">
    <property type="taxonomic scope" value="Eukaryota"/>
</dbReference>
<dbReference type="InParanoid" id="O81815"/>
<dbReference type="PhylomeDB" id="O81815"/>
<dbReference type="PRO" id="PR:O81815"/>
<dbReference type="Proteomes" id="UP000006548">
    <property type="component" value="Chromosome 4"/>
</dbReference>
<dbReference type="ExpressionAtlas" id="O81815">
    <property type="expression patterns" value="baseline and differential"/>
</dbReference>
<dbReference type="GO" id="GO:0005783">
    <property type="term" value="C:endoplasmic reticulum"/>
    <property type="evidence" value="ECO:0007005"/>
    <property type="project" value="TAIR"/>
</dbReference>
<dbReference type="GO" id="GO:0071949">
    <property type="term" value="F:FAD binding"/>
    <property type="evidence" value="ECO:0007669"/>
    <property type="project" value="InterPro"/>
</dbReference>
<dbReference type="GO" id="GO:0004497">
    <property type="term" value="F:monooxygenase activity"/>
    <property type="evidence" value="ECO:0007669"/>
    <property type="project" value="UniProtKB-KW"/>
</dbReference>
<dbReference type="GO" id="GO:0009620">
    <property type="term" value="P:response to fungus"/>
    <property type="evidence" value="ECO:0000270"/>
    <property type="project" value="UniProtKB"/>
</dbReference>
<dbReference type="FunFam" id="3.50.50.60:FF:000711">
    <property type="entry name" value="Monooxygenase 1"/>
    <property type="match status" value="1"/>
</dbReference>
<dbReference type="Gene3D" id="3.50.50.60">
    <property type="entry name" value="FAD/NAD(P)-binding domain"/>
    <property type="match status" value="1"/>
</dbReference>
<dbReference type="InterPro" id="IPR002938">
    <property type="entry name" value="FAD-bd"/>
</dbReference>
<dbReference type="InterPro" id="IPR036188">
    <property type="entry name" value="FAD/NAD-bd_sf"/>
</dbReference>
<dbReference type="InterPro" id="IPR044560">
    <property type="entry name" value="MOase"/>
</dbReference>
<dbReference type="PANTHER" id="PTHR45934">
    <property type="entry name" value="FAD/NAD(P)-BINDING OXIDOREDUCTASE FAMILY PROTEIN"/>
    <property type="match status" value="1"/>
</dbReference>
<dbReference type="PANTHER" id="PTHR45934:SF2">
    <property type="entry name" value="MONOOXYGENASE 1"/>
    <property type="match status" value="1"/>
</dbReference>
<dbReference type="Pfam" id="PF01494">
    <property type="entry name" value="FAD_binding_3"/>
    <property type="match status" value="1"/>
</dbReference>
<dbReference type="PRINTS" id="PR00420">
    <property type="entry name" value="RNGMNOXGNASE"/>
</dbReference>
<dbReference type="SUPFAM" id="SSF51905">
    <property type="entry name" value="FAD/NAD(P)-binding domain"/>
    <property type="match status" value="1"/>
</dbReference>
<comment type="cofactor">
    <cofactor evidence="1">
        <name>FAD</name>
        <dbReference type="ChEBI" id="CHEBI:57692"/>
    </cofactor>
</comment>
<comment type="subunit">
    <text evidence="1">Monomer.</text>
</comment>
<comment type="tissue specificity">
    <text evidence="2">Expressed in seedlings, roots, leaves, flowers and siliques.</text>
</comment>
<comment type="induction">
    <text evidence="3">Induced by A.brassicicola, especially in cv. Di-G during compatible interaction.</text>
</comment>
<comment type="similarity">
    <text evidence="5">Belongs to the 3-hydroxybenzoate 6-hydroxylase family.</text>
</comment>
<comment type="sequence caution" evidence="5">
    <conflict type="erroneous initiation">
        <sequence resource="EMBL-CDS" id="AEE83647"/>
    </conflict>
    <text>Extended N-terminus.</text>
</comment>
<comment type="sequence caution" evidence="5">
    <conflict type="erroneous gene model prediction">
        <sequence resource="EMBL-CDS" id="CAB10354"/>
    </conflict>
</comment>
<comment type="sequence caution" evidence="5">
    <conflict type="erroneous gene model prediction">
        <sequence resource="EMBL-CDS" id="CAB78618"/>
    </conflict>
</comment>
<gene>
    <name evidence="4" type="primary">MO1</name>
    <name evidence="6" type="ordered locus">At4g15760</name>
    <name evidence="7" type="ORF">dl3920c</name>
    <name evidence="8" type="ORF">FCAALL.376</name>
</gene>
<evidence type="ECO:0000250" key="1">
    <source>
        <dbReference type="UniProtKB" id="Q5EXK1"/>
    </source>
</evidence>
<evidence type="ECO:0000269" key="2">
    <source>
    </source>
</evidence>
<evidence type="ECO:0000269" key="3">
    <source>
    </source>
</evidence>
<evidence type="ECO:0000303" key="4">
    <source>
    </source>
</evidence>
<evidence type="ECO:0000305" key="5"/>
<evidence type="ECO:0000312" key="6">
    <source>
        <dbReference type="Araport" id="AT4G15760"/>
    </source>
</evidence>
<evidence type="ECO:0000312" key="7">
    <source>
        <dbReference type="EMBL" id="CAB10354.1"/>
    </source>
</evidence>
<evidence type="ECO:0000312" key="8">
    <source>
        <dbReference type="EMBL" id="CAB78618.1"/>
    </source>
</evidence>